<evidence type="ECO:0000255" key="1">
    <source>
        <dbReference type="HAMAP-Rule" id="MF_01365"/>
    </source>
</evidence>
<evidence type="ECO:0000305" key="2"/>
<sequence>MSRIGKQPVPVPTGVDVMIEGQKVSVKGPKGALDLTVAEPITVSRNDDGAIVISRPNDERRNRSLHGLSRTLVSNLVTGVTEGYTTKMEIHGVGYRVQLKGANLEFALGYSHPVVIEAPEGITFAVQAPTKFTVSGIDKQKVGQISANIRRLRRPDPYKGKGVRYEGEQIRRKVGKTGK</sequence>
<reference key="1">
    <citation type="journal article" date="2007" name="Genome Res.">
        <title>Reductive evolution and niche adaptation inferred from the genome of Mycobacterium ulcerans, the causative agent of Buruli ulcer.</title>
        <authorList>
            <person name="Stinear T.P."/>
            <person name="Seemann T."/>
            <person name="Pidot S."/>
            <person name="Frigui W."/>
            <person name="Reysset G."/>
            <person name="Garnier T."/>
            <person name="Meurice G."/>
            <person name="Simon D."/>
            <person name="Bouchier C."/>
            <person name="Ma L."/>
            <person name="Tichit M."/>
            <person name="Porter J.L."/>
            <person name="Ryan J."/>
            <person name="Johnson P.D.R."/>
            <person name="Davies J.K."/>
            <person name="Jenkin G.A."/>
            <person name="Small P.L.C."/>
            <person name="Jones L.M."/>
            <person name="Tekaia F."/>
            <person name="Laval F."/>
            <person name="Daffe M."/>
            <person name="Parkhill J."/>
            <person name="Cole S.T."/>
        </authorList>
    </citation>
    <scope>NUCLEOTIDE SEQUENCE [LARGE SCALE GENOMIC DNA]</scope>
    <source>
        <strain>Agy99</strain>
    </source>
</reference>
<gene>
    <name evidence="1" type="primary">rplF</name>
    <name type="ordered locus">MUL_0809</name>
</gene>
<protein>
    <recommendedName>
        <fullName evidence="1">Large ribosomal subunit protein uL6</fullName>
    </recommendedName>
    <alternativeName>
        <fullName evidence="2">50S ribosomal protein L6</fullName>
    </alternativeName>
</protein>
<proteinExistence type="inferred from homology"/>
<keyword id="KW-0687">Ribonucleoprotein</keyword>
<keyword id="KW-0689">Ribosomal protein</keyword>
<keyword id="KW-0694">RNA-binding</keyword>
<keyword id="KW-0699">rRNA-binding</keyword>
<accession>A0PM80</accession>
<comment type="function">
    <text evidence="1">This protein binds to the 23S rRNA, and is important in its secondary structure. It is located near the subunit interface in the base of the L7/L12 stalk, and near the tRNA binding site of the peptidyltransferase center.</text>
</comment>
<comment type="subunit">
    <text evidence="1">Part of the 50S ribosomal subunit.</text>
</comment>
<comment type="similarity">
    <text evidence="1">Belongs to the universal ribosomal protein uL6 family.</text>
</comment>
<feature type="chain" id="PRO_1000055270" description="Large ribosomal subunit protein uL6">
    <location>
        <begin position="1"/>
        <end position="179"/>
    </location>
</feature>
<organism>
    <name type="scientific">Mycobacterium ulcerans (strain Agy99)</name>
    <dbReference type="NCBI Taxonomy" id="362242"/>
    <lineage>
        <taxon>Bacteria</taxon>
        <taxon>Bacillati</taxon>
        <taxon>Actinomycetota</taxon>
        <taxon>Actinomycetes</taxon>
        <taxon>Mycobacteriales</taxon>
        <taxon>Mycobacteriaceae</taxon>
        <taxon>Mycobacterium</taxon>
        <taxon>Mycobacterium ulcerans group</taxon>
    </lineage>
</organism>
<name>RL6_MYCUA</name>
<dbReference type="EMBL" id="CP000325">
    <property type="protein sequence ID" value="ABL03449.1"/>
    <property type="molecule type" value="Genomic_DNA"/>
</dbReference>
<dbReference type="RefSeq" id="WP_011739074.1">
    <property type="nucleotide sequence ID" value="NC_008611.1"/>
</dbReference>
<dbReference type="SMR" id="A0PM80"/>
<dbReference type="GeneID" id="34339021"/>
<dbReference type="KEGG" id="mul:MUL_0809"/>
<dbReference type="eggNOG" id="COG0097">
    <property type="taxonomic scope" value="Bacteria"/>
</dbReference>
<dbReference type="HOGENOM" id="CLU_065464_1_2_11"/>
<dbReference type="Proteomes" id="UP000000765">
    <property type="component" value="Chromosome"/>
</dbReference>
<dbReference type="GO" id="GO:0022625">
    <property type="term" value="C:cytosolic large ribosomal subunit"/>
    <property type="evidence" value="ECO:0007669"/>
    <property type="project" value="TreeGrafter"/>
</dbReference>
<dbReference type="GO" id="GO:0019843">
    <property type="term" value="F:rRNA binding"/>
    <property type="evidence" value="ECO:0007669"/>
    <property type="project" value="UniProtKB-UniRule"/>
</dbReference>
<dbReference type="GO" id="GO:0003735">
    <property type="term" value="F:structural constituent of ribosome"/>
    <property type="evidence" value="ECO:0007669"/>
    <property type="project" value="InterPro"/>
</dbReference>
<dbReference type="GO" id="GO:0002181">
    <property type="term" value="P:cytoplasmic translation"/>
    <property type="evidence" value="ECO:0007669"/>
    <property type="project" value="TreeGrafter"/>
</dbReference>
<dbReference type="FunFam" id="3.90.930.12:FF:000001">
    <property type="entry name" value="50S ribosomal protein L6"/>
    <property type="match status" value="1"/>
</dbReference>
<dbReference type="FunFam" id="3.90.930.12:FF:000002">
    <property type="entry name" value="50S ribosomal protein L6"/>
    <property type="match status" value="1"/>
</dbReference>
<dbReference type="Gene3D" id="3.90.930.12">
    <property type="entry name" value="Ribosomal protein L6, alpha-beta domain"/>
    <property type="match status" value="2"/>
</dbReference>
<dbReference type="HAMAP" id="MF_01365_B">
    <property type="entry name" value="Ribosomal_uL6_B"/>
    <property type="match status" value="1"/>
</dbReference>
<dbReference type="InterPro" id="IPR000702">
    <property type="entry name" value="Ribosomal_uL6-like"/>
</dbReference>
<dbReference type="InterPro" id="IPR036789">
    <property type="entry name" value="Ribosomal_uL6-like_a/b-dom_sf"/>
</dbReference>
<dbReference type="InterPro" id="IPR020040">
    <property type="entry name" value="Ribosomal_uL6_a/b-dom"/>
</dbReference>
<dbReference type="InterPro" id="IPR019906">
    <property type="entry name" value="Ribosomal_uL6_bac-type"/>
</dbReference>
<dbReference type="InterPro" id="IPR002358">
    <property type="entry name" value="Ribosomal_uL6_CS"/>
</dbReference>
<dbReference type="NCBIfam" id="TIGR03654">
    <property type="entry name" value="L6_bact"/>
    <property type="match status" value="1"/>
</dbReference>
<dbReference type="PANTHER" id="PTHR11655">
    <property type="entry name" value="60S/50S RIBOSOMAL PROTEIN L6/L9"/>
    <property type="match status" value="1"/>
</dbReference>
<dbReference type="PANTHER" id="PTHR11655:SF14">
    <property type="entry name" value="LARGE RIBOSOMAL SUBUNIT PROTEIN UL6M"/>
    <property type="match status" value="1"/>
</dbReference>
<dbReference type="Pfam" id="PF00347">
    <property type="entry name" value="Ribosomal_L6"/>
    <property type="match status" value="2"/>
</dbReference>
<dbReference type="PIRSF" id="PIRSF002162">
    <property type="entry name" value="Ribosomal_L6"/>
    <property type="match status" value="1"/>
</dbReference>
<dbReference type="PRINTS" id="PR00059">
    <property type="entry name" value="RIBOSOMALL6"/>
</dbReference>
<dbReference type="SUPFAM" id="SSF56053">
    <property type="entry name" value="Ribosomal protein L6"/>
    <property type="match status" value="2"/>
</dbReference>
<dbReference type="PROSITE" id="PS00525">
    <property type="entry name" value="RIBOSOMAL_L6_1"/>
    <property type="match status" value="1"/>
</dbReference>